<name>YOMM_BACSU</name>
<sequence>MTKPIEKNMLRSRAIKLPEVTESMWEQVDEEHRNLVQEFLDAHSFRDKTRKQYYSSLRQFFWWVHTSLNGKKLYKISKRDFIRYQSFLKNRGMSSSGIALKKAGVSSLNNYIENVVAEDDHNYEKFRNFTRGLPAIPKTTTYEKVKVTYDDYKLMMDALKEDENYLGMAWLATAFNVGGRRAELIQLKTEILDYPVPEGQSYVMSHKVFGKGKGEGKPLEYMINTEALEYLRLWHEKRGYDHEYLFTTQYGGEPKQMSESWADYFCSDVLSDILGRRINPHLFKASCITYLLEVKKVKIELISKYVAHHEDVSTTIKHYDLRDFEEEKNQIFV</sequence>
<organism>
    <name type="scientific">Bacillus subtilis (strain 168)</name>
    <dbReference type="NCBI Taxonomy" id="224308"/>
    <lineage>
        <taxon>Bacteria</taxon>
        <taxon>Bacillati</taxon>
        <taxon>Bacillota</taxon>
        <taxon>Bacilli</taxon>
        <taxon>Bacillales</taxon>
        <taxon>Bacillaceae</taxon>
        <taxon>Bacillus</taxon>
    </lineage>
</organism>
<protein>
    <recommendedName>
        <fullName>SPbeta prophage-derived recombinase-like protein YomM</fullName>
    </recommendedName>
</protein>
<gene>
    <name type="primary">yomM</name>
    <name type="ordered locus">BSU21300</name>
</gene>
<dbReference type="EMBL" id="AL009126">
    <property type="protein sequence ID" value="CAB14048.1"/>
    <property type="molecule type" value="Genomic_DNA"/>
</dbReference>
<dbReference type="RefSeq" id="NP_390013.1">
    <property type="nucleotide sequence ID" value="NC_000964.3"/>
</dbReference>
<dbReference type="RefSeq" id="WP_009969431.1">
    <property type="nucleotide sequence ID" value="NZ_OZ025638.1"/>
</dbReference>
<dbReference type="SMR" id="O31971"/>
<dbReference type="FunCoup" id="O31971">
    <property type="interactions" value="50"/>
</dbReference>
<dbReference type="STRING" id="224308.BSU21300"/>
<dbReference type="PaxDb" id="224308-BSU21300"/>
<dbReference type="EnsemblBacteria" id="CAB14048">
    <property type="protein sequence ID" value="CAB14048"/>
    <property type="gene ID" value="BSU_21300"/>
</dbReference>
<dbReference type="GeneID" id="939145"/>
<dbReference type="KEGG" id="bsu:BSU21300"/>
<dbReference type="PATRIC" id="fig|224308.179.peg.2325"/>
<dbReference type="eggNOG" id="COG0582">
    <property type="taxonomic scope" value="Bacteria"/>
</dbReference>
<dbReference type="InParanoid" id="O31971"/>
<dbReference type="OrthoDB" id="9801717at2"/>
<dbReference type="BioCyc" id="BSUB:BSU21300-MONOMER"/>
<dbReference type="Proteomes" id="UP000001570">
    <property type="component" value="Chromosome"/>
</dbReference>
<dbReference type="GO" id="GO:0003677">
    <property type="term" value="F:DNA binding"/>
    <property type="evidence" value="ECO:0007669"/>
    <property type="project" value="UniProtKB-KW"/>
</dbReference>
<dbReference type="GO" id="GO:0009009">
    <property type="term" value="F:site-specific recombinase activity"/>
    <property type="evidence" value="ECO:0000318"/>
    <property type="project" value="GO_Central"/>
</dbReference>
<dbReference type="GO" id="GO:0007059">
    <property type="term" value="P:chromosome segregation"/>
    <property type="evidence" value="ECO:0000318"/>
    <property type="project" value="GO_Central"/>
</dbReference>
<dbReference type="GO" id="GO:0006310">
    <property type="term" value="P:DNA recombination"/>
    <property type="evidence" value="ECO:0000318"/>
    <property type="project" value="GO_Central"/>
</dbReference>
<dbReference type="CDD" id="cd00397">
    <property type="entry name" value="DNA_BRE_C"/>
    <property type="match status" value="1"/>
</dbReference>
<dbReference type="Gene3D" id="1.10.150.130">
    <property type="match status" value="1"/>
</dbReference>
<dbReference type="Gene3D" id="1.10.443.10">
    <property type="entry name" value="Intergrase catalytic core"/>
    <property type="match status" value="1"/>
</dbReference>
<dbReference type="InterPro" id="IPR044068">
    <property type="entry name" value="CB"/>
</dbReference>
<dbReference type="InterPro" id="IPR011010">
    <property type="entry name" value="DNA_brk_join_enz"/>
</dbReference>
<dbReference type="InterPro" id="IPR013762">
    <property type="entry name" value="Integrase-like_cat_sf"/>
</dbReference>
<dbReference type="InterPro" id="IPR002104">
    <property type="entry name" value="Integrase_catalytic"/>
</dbReference>
<dbReference type="InterPro" id="IPR010998">
    <property type="entry name" value="Integrase_recombinase_N"/>
</dbReference>
<dbReference type="InterPro" id="IPR050090">
    <property type="entry name" value="Tyrosine_recombinase_XerCD"/>
</dbReference>
<dbReference type="PANTHER" id="PTHR30349">
    <property type="entry name" value="PHAGE INTEGRASE-RELATED"/>
    <property type="match status" value="1"/>
</dbReference>
<dbReference type="PANTHER" id="PTHR30349:SF64">
    <property type="entry name" value="PROPHAGE INTEGRASE INTD-RELATED"/>
    <property type="match status" value="1"/>
</dbReference>
<dbReference type="SUPFAM" id="SSF56349">
    <property type="entry name" value="DNA breaking-rejoining enzymes"/>
    <property type="match status" value="1"/>
</dbReference>
<dbReference type="PROSITE" id="PS51900">
    <property type="entry name" value="CB"/>
    <property type="match status" value="1"/>
</dbReference>
<dbReference type="PROSITE" id="PS51898">
    <property type="entry name" value="TYR_RECOMBINASE"/>
    <property type="match status" value="1"/>
</dbReference>
<evidence type="ECO:0000255" key="1">
    <source>
        <dbReference type="PROSITE-ProRule" id="PRU01246"/>
    </source>
</evidence>
<evidence type="ECO:0000255" key="2">
    <source>
        <dbReference type="PROSITE-ProRule" id="PRU01248"/>
    </source>
</evidence>
<evidence type="ECO:0000305" key="3"/>
<keyword id="KW-0233">DNA recombination</keyword>
<keyword id="KW-0238">DNA-binding</keyword>
<keyword id="KW-1185">Reference proteome</keyword>
<proteinExistence type="inferred from homology"/>
<reference key="1">
    <citation type="journal article" date="1997" name="Nature">
        <title>The complete genome sequence of the Gram-positive bacterium Bacillus subtilis.</title>
        <authorList>
            <person name="Kunst F."/>
            <person name="Ogasawara N."/>
            <person name="Moszer I."/>
            <person name="Albertini A.M."/>
            <person name="Alloni G."/>
            <person name="Azevedo V."/>
            <person name="Bertero M.G."/>
            <person name="Bessieres P."/>
            <person name="Bolotin A."/>
            <person name="Borchert S."/>
            <person name="Borriss R."/>
            <person name="Boursier L."/>
            <person name="Brans A."/>
            <person name="Braun M."/>
            <person name="Brignell S.C."/>
            <person name="Bron S."/>
            <person name="Brouillet S."/>
            <person name="Bruschi C.V."/>
            <person name="Caldwell B."/>
            <person name="Capuano V."/>
            <person name="Carter N.M."/>
            <person name="Choi S.-K."/>
            <person name="Codani J.-J."/>
            <person name="Connerton I.F."/>
            <person name="Cummings N.J."/>
            <person name="Daniel R.A."/>
            <person name="Denizot F."/>
            <person name="Devine K.M."/>
            <person name="Duesterhoeft A."/>
            <person name="Ehrlich S.D."/>
            <person name="Emmerson P.T."/>
            <person name="Entian K.-D."/>
            <person name="Errington J."/>
            <person name="Fabret C."/>
            <person name="Ferrari E."/>
            <person name="Foulger D."/>
            <person name="Fritz C."/>
            <person name="Fujita M."/>
            <person name="Fujita Y."/>
            <person name="Fuma S."/>
            <person name="Galizzi A."/>
            <person name="Galleron N."/>
            <person name="Ghim S.-Y."/>
            <person name="Glaser P."/>
            <person name="Goffeau A."/>
            <person name="Golightly E.J."/>
            <person name="Grandi G."/>
            <person name="Guiseppi G."/>
            <person name="Guy B.J."/>
            <person name="Haga K."/>
            <person name="Haiech J."/>
            <person name="Harwood C.R."/>
            <person name="Henaut A."/>
            <person name="Hilbert H."/>
            <person name="Holsappel S."/>
            <person name="Hosono S."/>
            <person name="Hullo M.-F."/>
            <person name="Itaya M."/>
            <person name="Jones L.-M."/>
            <person name="Joris B."/>
            <person name="Karamata D."/>
            <person name="Kasahara Y."/>
            <person name="Klaerr-Blanchard M."/>
            <person name="Klein C."/>
            <person name="Kobayashi Y."/>
            <person name="Koetter P."/>
            <person name="Koningstein G."/>
            <person name="Krogh S."/>
            <person name="Kumano M."/>
            <person name="Kurita K."/>
            <person name="Lapidus A."/>
            <person name="Lardinois S."/>
            <person name="Lauber J."/>
            <person name="Lazarevic V."/>
            <person name="Lee S.-M."/>
            <person name="Levine A."/>
            <person name="Liu H."/>
            <person name="Masuda S."/>
            <person name="Mauel C."/>
            <person name="Medigue C."/>
            <person name="Medina N."/>
            <person name="Mellado R.P."/>
            <person name="Mizuno M."/>
            <person name="Moestl D."/>
            <person name="Nakai S."/>
            <person name="Noback M."/>
            <person name="Noone D."/>
            <person name="O'Reilly M."/>
            <person name="Ogawa K."/>
            <person name="Ogiwara A."/>
            <person name="Oudega B."/>
            <person name="Park S.-H."/>
            <person name="Parro V."/>
            <person name="Pohl T.M."/>
            <person name="Portetelle D."/>
            <person name="Porwollik S."/>
            <person name="Prescott A.M."/>
            <person name="Presecan E."/>
            <person name="Pujic P."/>
            <person name="Purnelle B."/>
            <person name="Rapoport G."/>
            <person name="Rey M."/>
            <person name="Reynolds S."/>
            <person name="Rieger M."/>
            <person name="Rivolta C."/>
            <person name="Rocha E."/>
            <person name="Roche B."/>
            <person name="Rose M."/>
            <person name="Sadaie Y."/>
            <person name="Sato T."/>
            <person name="Scanlan E."/>
            <person name="Schleich S."/>
            <person name="Schroeter R."/>
            <person name="Scoffone F."/>
            <person name="Sekiguchi J."/>
            <person name="Sekowska A."/>
            <person name="Seror S.J."/>
            <person name="Serror P."/>
            <person name="Shin B.-S."/>
            <person name="Soldo B."/>
            <person name="Sorokin A."/>
            <person name="Tacconi E."/>
            <person name="Takagi T."/>
            <person name="Takahashi H."/>
            <person name="Takemaru K."/>
            <person name="Takeuchi M."/>
            <person name="Tamakoshi A."/>
            <person name="Tanaka T."/>
            <person name="Terpstra P."/>
            <person name="Tognoni A."/>
            <person name="Tosato V."/>
            <person name="Uchiyama S."/>
            <person name="Vandenbol M."/>
            <person name="Vannier F."/>
            <person name="Vassarotti A."/>
            <person name="Viari A."/>
            <person name="Wambutt R."/>
            <person name="Wedler E."/>
            <person name="Wedler H."/>
            <person name="Weitzenegger T."/>
            <person name="Winters P."/>
            <person name="Wipat A."/>
            <person name="Yamamoto H."/>
            <person name="Yamane K."/>
            <person name="Yasumoto K."/>
            <person name="Yata K."/>
            <person name="Yoshida K."/>
            <person name="Yoshikawa H.-F."/>
            <person name="Zumstein E."/>
            <person name="Yoshikawa H."/>
            <person name="Danchin A."/>
        </authorList>
    </citation>
    <scope>NUCLEOTIDE SEQUENCE [LARGE SCALE GENOMIC DNA]</scope>
    <source>
        <strain>168</strain>
    </source>
</reference>
<accession>O31971</accession>
<comment type="similarity">
    <text evidence="3">Belongs to the 'phage' integrase family.</text>
</comment>
<comment type="caution">
    <text evidence="3">Although strongly related to the 'phage' integrase family this protein lacks the conserved Tyr at position 318 suggesting it has no recombinase activity.</text>
</comment>
<feature type="chain" id="PRO_0000360513" description="SPbeta prophage-derived recombinase-like protein YomM">
    <location>
        <begin position="1"/>
        <end position="333"/>
    </location>
</feature>
<feature type="domain" description="Core-binding (CB)" evidence="2">
    <location>
        <begin position="30"/>
        <end position="113"/>
    </location>
</feature>
<feature type="domain" description="Tyr recombinase" evidence="1">
    <location>
        <begin position="142"/>
        <end position="332"/>
    </location>
</feature>
<feature type="active site" evidence="1">
    <location>
        <position position="180"/>
    </location>
</feature>
<feature type="active site" evidence="1">
    <location>
        <position position="211"/>
    </location>
</feature>
<feature type="active site" evidence="1">
    <location>
        <position position="281"/>
    </location>
</feature>
<feature type="active site" evidence="1">
    <location>
        <position position="308"/>
    </location>
</feature>
<feature type="active site" description="O-(3'-phospho-DNA)-tyrosine intermediate" evidence="1">
    <location>
        <position position="319"/>
    </location>
</feature>